<keyword id="KW-1003">Cell membrane</keyword>
<keyword id="KW-1015">Disulfide bond</keyword>
<keyword id="KW-0895">ERV</keyword>
<keyword id="KW-0472">Membrane</keyword>
<keyword id="KW-1267">Proteomics identification</keyword>
<keyword id="KW-1185">Reference proteome</keyword>
<keyword id="KW-0732">Signal</keyword>
<keyword id="KW-0812">Transmembrane</keyword>
<keyword id="KW-1133">Transmembrane helix</keyword>
<keyword id="KW-0814">Transposable element</keyword>
<sequence>MGPEAWVRPLKTAPKPGEAIRLILFIYLSCFFLPVMSSEPSYSFLLTSFTTGRVFANTTWRAGTSKEVSFAVDLCVLFPEPARTHEEQHNLPVIGAGSVDLAAGFGHSGSQTGCGSSKGAEKGLQNVDFYLCPGNHPDASCRDTYQFFCPDWTCVTLATYSGGSTRSSTLSISRVPHPKLCTRKNCNPLTITVHDPNAAQWYYGMSWGLRLYIPGFDVGTMFTIQKKILVSWSSPKPIGPLTDLGDPIFQKHPDKVDLTVPLPFLVPRPQLQQQHLQPSLMSILGGVHHLLNLTQPKLAQDCWLCLKAKPPYYVGLGVEATLKRGPLSCHTRPRALTIGDVSGNASCLISTGYNLSASPFQATCNQSLLTSISTSVSYQAPNNTWLACTSGLTRCINGTEPGPLLCVLVHVLPQVYVYSGPEGRQLIAPPELHPRLHQAVPLLVPLLAGLSIAGSAAIGTAALVQGETGLISLSQQVDADFSNLQSAIDILHSQVESLAEVVLQNCRCLDLLFLSQGGLCAALGESCCFYANQSGVIKGTVKKVRENLDRHQQERENNIPWYQSMFNWNPWLTTLITGLAGPLLILLLSLIFGPCILNSFLNFIKQRIASVKLTYLKTQYDTLVNN</sequence>
<name>ENVT1_HUMAN</name>
<accession>P61550</accession>
<accession>I7GPQ9</accession>
<evidence type="ECO:0000250" key="1"/>
<evidence type="ECO:0000255" key="2"/>
<evidence type="ECO:0000269" key="3">
    <source>
    </source>
</evidence>
<evidence type="ECO:0000269" key="4">
    <source>
    </source>
</evidence>
<evidence type="ECO:0000305" key="5"/>
<organism>
    <name type="scientific">Homo sapiens</name>
    <name type="common">Human</name>
    <dbReference type="NCBI Taxonomy" id="9606"/>
    <lineage>
        <taxon>Eukaryota</taxon>
        <taxon>Metazoa</taxon>
        <taxon>Chordata</taxon>
        <taxon>Craniata</taxon>
        <taxon>Vertebrata</taxon>
        <taxon>Euteleostomi</taxon>
        <taxon>Mammalia</taxon>
        <taxon>Eutheria</taxon>
        <taxon>Euarchontoglires</taxon>
        <taxon>Primates</taxon>
        <taxon>Haplorrhini</taxon>
        <taxon>Catarrhini</taxon>
        <taxon>Hominidae</taxon>
        <taxon>Homo</taxon>
    </lineage>
</organism>
<protein>
    <recommendedName>
        <fullName>Endogenous retrovirus group S71 member 1 Env polyprotein</fullName>
    </recommendedName>
    <alternativeName>
        <fullName>Envelope polyprotein</fullName>
    </alternativeName>
    <alternativeName>
        <fullName>HERV-T Env protein</fullName>
    </alternativeName>
    <alternativeName>
        <fullName>HERV-T_19q13.11 provirus ancestral Env polyprotein</fullName>
    </alternativeName>
    <domain>
        <recommendedName>
            <fullName>Surface protein</fullName>
            <shortName>SU</shortName>
        </recommendedName>
    </domain>
    <domain>
        <recommendedName>
            <fullName>Transmembrane protein</fullName>
            <shortName>TM</shortName>
        </recommendedName>
    </domain>
</protein>
<reference key="1">
    <citation type="submission" date="2006-07" db="EMBL/GenBank/DDBJ databases">
        <title>Functional receptor binding domain encoded by the human endogenous retroviral envT gene and the presence of an envT-related env gene within the context of formerly envelope-less HC2 provirus.</title>
        <authorList>
            <person name="Abe H."/>
            <person name="Lavanya M."/>
            <person name="Kajiwara E."/>
            <person name="Kitaguchi D."/>
            <person name="Manel N."/>
            <person name="Arita T."/>
            <person name="Tsuji-Kawahara S."/>
            <person name="Battini J.L."/>
            <person name="Takemura T."/>
            <person name="Sitbon M."/>
            <person name="Miyazawa M."/>
        </authorList>
    </citation>
    <scope>NUCLEOTIDE SEQUENCE [MRNA]</scope>
    <source>
        <tissue>Thyroid</tissue>
    </source>
</reference>
<reference key="2">
    <citation type="journal article" date="2004" name="Nature">
        <title>The DNA sequence and biology of human chromosome 19.</title>
        <authorList>
            <person name="Grimwood J."/>
            <person name="Gordon L.A."/>
            <person name="Olsen A.S."/>
            <person name="Terry A."/>
            <person name="Schmutz J."/>
            <person name="Lamerdin J.E."/>
            <person name="Hellsten U."/>
            <person name="Goodstein D."/>
            <person name="Couronne O."/>
            <person name="Tran-Gyamfi M."/>
            <person name="Aerts A."/>
            <person name="Altherr M."/>
            <person name="Ashworth L."/>
            <person name="Bajorek E."/>
            <person name="Black S."/>
            <person name="Branscomb E."/>
            <person name="Caenepeel S."/>
            <person name="Carrano A.V."/>
            <person name="Caoile C."/>
            <person name="Chan Y.M."/>
            <person name="Christensen M."/>
            <person name="Cleland C.A."/>
            <person name="Copeland A."/>
            <person name="Dalin E."/>
            <person name="Dehal P."/>
            <person name="Denys M."/>
            <person name="Detter J.C."/>
            <person name="Escobar J."/>
            <person name="Flowers D."/>
            <person name="Fotopulos D."/>
            <person name="Garcia C."/>
            <person name="Georgescu A.M."/>
            <person name="Glavina T."/>
            <person name="Gomez M."/>
            <person name="Gonzales E."/>
            <person name="Groza M."/>
            <person name="Hammon N."/>
            <person name="Hawkins T."/>
            <person name="Haydu L."/>
            <person name="Ho I."/>
            <person name="Huang W."/>
            <person name="Israni S."/>
            <person name="Jett J."/>
            <person name="Kadner K."/>
            <person name="Kimball H."/>
            <person name="Kobayashi A."/>
            <person name="Larionov V."/>
            <person name="Leem S.-H."/>
            <person name="Lopez F."/>
            <person name="Lou Y."/>
            <person name="Lowry S."/>
            <person name="Malfatti S."/>
            <person name="Martinez D."/>
            <person name="McCready P.M."/>
            <person name="Medina C."/>
            <person name="Morgan J."/>
            <person name="Nelson K."/>
            <person name="Nolan M."/>
            <person name="Ovcharenko I."/>
            <person name="Pitluck S."/>
            <person name="Pollard M."/>
            <person name="Popkie A.P."/>
            <person name="Predki P."/>
            <person name="Quan G."/>
            <person name="Ramirez L."/>
            <person name="Rash S."/>
            <person name="Retterer J."/>
            <person name="Rodriguez A."/>
            <person name="Rogers S."/>
            <person name="Salamov A."/>
            <person name="Salazar A."/>
            <person name="She X."/>
            <person name="Smith D."/>
            <person name="Slezak T."/>
            <person name="Solovyev V."/>
            <person name="Thayer N."/>
            <person name="Tice H."/>
            <person name="Tsai M."/>
            <person name="Ustaszewska A."/>
            <person name="Vo N."/>
            <person name="Wagner M."/>
            <person name="Wheeler J."/>
            <person name="Wu K."/>
            <person name="Xie G."/>
            <person name="Yang J."/>
            <person name="Dubchak I."/>
            <person name="Furey T.S."/>
            <person name="DeJong P."/>
            <person name="Dickson M."/>
            <person name="Gordon D."/>
            <person name="Eichler E.E."/>
            <person name="Pennacchio L.A."/>
            <person name="Richardson P."/>
            <person name="Stubbs L."/>
            <person name="Rokhsar D.S."/>
            <person name="Myers R.M."/>
            <person name="Rubin E.M."/>
            <person name="Lucas S.M."/>
        </authorList>
    </citation>
    <scope>NUCLEOTIDE SEQUENCE [LARGE SCALE GENOMIC DNA]</scope>
</reference>
<reference key="3">
    <citation type="journal article" date="2003" name="Proc. Natl. Acad. Sci. U.S.A.">
        <title>Genomewide screening for fusogenic human endogenous retrovirus envelopes identifies syncytin 2, a gene conserved on primate evolution.</title>
        <authorList>
            <person name="Blaise S."/>
            <person name="de Parseval N."/>
            <person name="Benit L."/>
            <person name="Heidmann T."/>
        </authorList>
    </citation>
    <scope>FUNCTION</scope>
</reference>
<reference key="4">
    <citation type="journal article" date="2003" name="J. Virol.">
        <title>Survey of human genes of retroviral origin: identification and transcriptome of the genes with coding capacity for complete envelope proteins.</title>
        <authorList>
            <person name="de Parseval N."/>
            <person name="Lazar V."/>
            <person name="Casella J.-F."/>
            <person name="Benit L."/>
            <person name="Heidmann T."/>
        </authorList>
    </citation>
    <scope>TISSUE SPECIFICITY</scope>
</reference>
<gene>
    <name type="primary">ERVS71-1</name>
</gene>
<proteinExistence type="evidence at protein level"/>
<comment type="function">
    <text evidence="4">Retroviral envelope proteins mediate receptor recognition and membrane fusion during early infection. Endogenous envelope proteins may have kept, lost or modified their original function during evolution. This endogenous envelope protein has lost its original fusogenic properties.</text>
</comment>
<comment type="subcellular location">
    <subcellularLocation>
        <location evidence="5">Cell membrane</location>
        <topology evidence="5">Single-pass membrane protein</topology>
    </subcellularLocation>
    <text evidence="5">At the origin, this retroviral envelope protein was localized in the virion.</text>
</comment>
<comment type="tissue specificity">
    <text evidence="3">Expressed at higher level in thyroid. Expressed at lower level in adrenal, bone marrow, brain, breast, kidney, ovary, placenta, prostate, skin, testis and trachea.</text>
</comment>
<comment type="domain">
    <text evidence="1">The CKS-17 immunosuppressive domain is present in many retroviral envelope proteins. As a synthetic peptide, it inhibits immune function in vitro and in vivo (By similarity).</text>
</comment>
<comment type="PTM">
    <text evidence="1">The CXXC motif is highly conserved across a broad range of retroviral envelope proteins. It is thought to participate in the formation of a labile disulfide bond possibly with the CX6CC motif present in the transmembrane domain (By similarity).</text>
</comment>
<comment type="similarity">
    <text evidence="5">Belongs to the gamma type-C retroviral envelope protein family. HERV class-I T env subfamily.</text>
</comment>
<comment type="caution">
    <text evidence="5">The cleavage site does not match the consensus.</text>
</comment>
<comment type="caution">
    <text evidence="5">CKS-17 sequence does not match the minimal active consensus.</text>
</comment>
<feature type="signal peptide" evidence="2">
    <location>
        <begin position="1"/>
        <end position="38"/>
    </location>
</feature>
<feature type="chain" id="PRO_0000008481" description="Endogenous retrovirus group S71 member 1 Env polyprotein">
    <location>
        <begin position="39"/>
        <end position="626"/>
    </location>
</feature>
<feature type="topological domain" description="Extracellular" evidence="2">
    <location>
        <begin position="39"/>
        <end position="575"/>
    </location>
</feature>
<feature type="transmembrane region" description="Helical" evidence="2">
    <location>
        <begin position="576"/>
        <end position="596"/>
    </location>
</feature>
<feature type="topological domain" description="Cytoplasmic" evidence="2">
    <location>
        <begin position="597"/>
        <end position="626"/>
    </location>
</feature>
<feature type="region of interest" description="Surface protein" evidence="1">
    <location>
        <begin position="39"/>
        <end position="438"/>
    </location>
</feature>
<feature type="region of interest" description="Transmembrane protein" evidence="1">
    <location>
        <begin position="439"/>
        <end position="626"/>
    </location>
</feature>
<feature type="region of interest" description="Fusion peptide" evidence="1">
    <location>
        <begin position="439"/>
        <end position="459"/>
    </location>
</feature>
<feature type="short sequence motif" description="CXXC" evidence="1">
    <location>
        <begin position="302"/>
        <end position="305"/>
    </location>
</feature>
<feature type="short sequence motif" description="CKS-17" evidence="1">
    <location>
        <begin position="503"/>
        <end position="519"/>
    </location>
</feature>
<feature type="short sequence motif" description="CX6CC" evidence="1">
    <location>
        <begin position="520"/>
        <end position="528"/>
    </location>
</feature>
<feature type="site" description="Ancestral cleavage site" evidence="2">
    <location>
        <begin position="438"/>
        <end position="439"/>
    </location>
</feature>
<feature type="disulfide bond" evidence="1">
    <location>
        <begin position="520"/>
        <end position="527"/>
    </location>
</feature>
<dbReference type="EMBL" id="AB266802">
    <property type="protein sequence ID" value="BAG06168.1"/>
    <property type="molecule type" value="mRNA"/>
</dbReference>
<dbReference type="EMBL" id="AC078899">
    <property type="status" value="NOT_ANNOTATED_CDS"/>
    <property type="molecule type" value="Genomic_DNA"/>
</dbReference>
<dbReference type="RefSeq" id="XP_011526770.1">
    <property type="nucleotide sequence ID" value="XM_011528468.2"/>
</dbReference>
<dbReference type="RefSeq" id="XP_011526771.1">
    <property type="nucleotide sequence ID" value="XM_011528469.2"/>
</dbReference>
<dbReference type="SMR" id="P61550"/>
<dbReference type="BioMuta" id="HGNC:41525"/>
<dbReference type="DMDM" id="47716681"/>
<dbReference type="MassIVE" id="P61550"/>
<dbReference type="GeneCards" id="ERVS71-1"/>
<dbReference type="HGNC" id="HGNC:41525">
    <property type="gene designation" value="ERVS71-1"/>
</dbReference>
<dbReference type="neXtProt" id="NX_P61550"/>
<dbReference type="GeneTree" id="ENSGT00690000102286"/>
<dbReference type="InParanoid" id="P61550"/>
<dbReference type="PAN-GO" id="P61550">
    <property type="GO annotations" value="0 GO annotations based on evolutionary models"/>
</dbReference>
<dbReference type="PhylomeDB" id="P61550"/>
<dbReference type="Pharos" id="P61550">
    <property type="development level" value="Tdark"/>
</dbReference>
<dbReference type="PRO" id="PR:P61550"/>
<dbReference type="Proteomes" id="UP000005640">
    <property type="component" value="Unplaced"/>
</dbReference>
<dbReference type="RNAct" id="P61550">
    <property type="molecule type" value="protein"/>
</dbReference>
<dbReference type="GO" id="GO:0005886">
    <property type="term" value="C:plasma membrane"/>
    <property type="evidence" value="ECO:0007669"/>
    <property type="project" value="UniProtKB-SubCell"/>
</dbReference>
<dbReference type="CDD" id="cd09851">
    <property type="entry name" value="HTLV-1-like_HR1-HR2"/>
    <property type="match status" value="1"/>
</dbReference>
<dbReference type="Gene3D" id="1.10.287.210">
    <property type="match status" value="1"/>
</dbReference>
<dbReference type="Gene3D" id="3.90.310.10">
    <property type="entry name" value="ENV polyprotein, receptor-binding domain"/>
    <property type="match status" value="1"/>
</dbReference>
<dbReference type="InterPro" id="IPR008981">
    <property type="entry name" value="FMuLV_rcpt-bd"/>
</dbReference>
<dbReference type="InterPro" id="IPR018154">
    <property type="entry name" value="TLV/ENV_coat_polyprotein"/>
</dbReference>
<dbReference type="PANTHER" id="PTHR10424:SF75">
    <property type="entry name" value="ENDOGENOUS RETROVIRUS GROUP S71 MEMBER 1 ENV POLYPROTEIN"/>
    <property type="match status" value="1"/>
</dbReference>
<dbReference type="PANTHER" id="PTHR10424">
    <property type="entry name" value="VIRAL ENVELOPE PROTEIN"/>
    <property type="match status" value="1"/>
</dbReference>
<dbReference type="Pfam" id="PF00429">
    <property type="entry name" value="TLV_coat"/>
    <property type="match status" value="1"/>
</dbReference>
<dbReference type="SUPFAM" id="SSF49830">
    <property type="entry name" value="ENV polyprotein, receptor-binding domain"/>
    <property type="match status" value="1"/>
</dbReference>
<dbReference type="SUPFAM" id="SSF58069">
    <property type="entry name" value="Virus ectodomain"/>
    <property type="match status" value="1"/>
</dbReference>